<name>ISPG_FRATM</name>
<keyword id="KW-0004">4Fe-4S</keyword>
<keyword id="KW-0408">Iron</keyword>
<keyword id="KW-0411">Iron-sulfur</keyword>
<keyword id="KW-0414">Isoprene biosynthesis</keyword>
<keyword id="KW-0479">Metal-binding</keyword>
<keyword id="KW-0560">Oxidoreductase</keyword>
<sequence>MGSYMNKTSVVKVGNVLIGGDNPVVVQSMTDTYTADVEKTVRQILALHKAGSEIVRITVNDESAAAAVPEIVKELAKHDCHVPLVGDFHYNGHTLLSKYPECAKALAKYRINPGNVGFGKKKDTQFAEIIKIAIANDKPVRIGVNWGSLDQALLARLIDENNAQENPLSLQQIMYKALITSALESAKYAEELGLAKDKIIISCKVSEVQDLIAVYQKLAKECDYALHLGLTEAGMGTKGIVASAVSLGILLQQGIGNTIRVSLTPAPNAPRTEEVRVCREILQNLGMRTFTPSVTSCPGCGRTTSSFFRELTSKVKDHLDEKMHTWKEQYHGVEAMKVAVMGCVVNGPGESKNADIGISLPGSGESPVAPVFIDGKKAHTLRGDNISEEFIEIVENYVKNRYGKK</sequence>
<comment type="function">
    <text evidence="1">Converts 2C-methyl-D-erythritol 2,4-cyclodiphosphate (ME-2,4cPP) into 1-hydroxy-2-methyl-2-(E)-butenyl 4-diphosphate.</text>
</comment>
<comment type="catalytic activity">
    <reaction evidence="1">
        <text>(2E)-4-hydroxy-3-methylbut-2-enyl diphosphate + oxidized [flavodoxin] + H2O + 2 H(+) = 2-C-methyl-D-erythritol 2,4-cyclic diphosphate + reduced [flavodoxin]</text>
        <dbReference type="Rhea" id="RHEA:43604"/>
        <dbReference type="Rhea" id="RHEA-COMP:10622"/>
        <dbReference type="Rhea" id="RHEA-COMP:10623"/>
        <dbReference type="ChEBI" id="CHEBI:15377"/>
        <dbReference type="ChEBI" id="CHEBI:15378"/>
        <dbReference type="ChEBI" id="CHEBI:57618"/>
        <dbReference type="ChEBI" id="CHEBI:58210"/>
        <dbReference type="ChEBI" id="CHEBI:58483"/>
        <dbReference type="ChEBI" id="CHEBI:128753"/>
        <dbReference type="EC" id="1.17.7.3"/>
    </reaction>
</comment>
<comment type="cofactor">
    <cofactor evidence="1">
        <name>[4Fe-4S] cluster</name>
        <dbReference type="ChEBI" id="CHEBI:49883"/>
    </cofactor>
    <text evidence="1">Binds 1 [4Fe-4S] cluster.</text>
</comment>
<comment type="pathway">
    <text evidence="1">Isoprenoid biosynthesis; isopentenyl diphosphate biosynthesis via DXP pathway; isopentenyl diphosphate from 1-deoxy-D-xylulose 5-phosphate: step 5/6.</text>
</comment>
<comment type="similarity">
    <text evidence="1">Belongs to the IspG family.</text>
</comment>
<gene>
    <name evidence="1" type="primary">ispG</name>
    <name type="ordered locus">FTM_0682</name>
</gene>
<protein>
    <recommendedName>
        <fullName evidence="1">4-hydroxy-3-methylbut-2-en-1-yl diphosphate synthase (flavodoxin)</fullName>
        <ecNumber evidence="1">1.17.7.3</ecNumber>
    </recommendedName>
    <alternativeName>
        <fullName evidence="1">1-hydroxy-2-methyl-2-(E)-butenyl 4-diphosphate synthase</fullName>
    </alternativeName>
</protein>
<accession>B2SG03</accession>
<evidence type="ECO:0000255" key="1">
    <source>
        <dbReference type="HAMAP-Rule" id="MF_00159"/>
    </source>
</evidence>
<proteinExistence type="inferred from homology"/>
<organism>
    <name type="scientific">Francisella tularensis subsp. mediasiatica (strain FSC147)</name>
    <dbReference type="NCBI Taxonomy" id="441952"/>
    <lineage>
        <taxon>Bacteria</taxon>
        <taxon>Pseudomonadati</taxon>
        <taxon>Pseudomonadota</taxon>
        <taxon>Gammaproteobacteria</taxon>
        <taxon>Thiotrichales</taxon>
        <taxon>Francisellaceae</taxon>
        <taxon>Francisella</taxon>
    </lineage>
</organism>
<dbReference type="EC" id="1.17.7.3" evidence="1"/>
<dbReference type="EMBL" id="CP000915">
    <property type="protein sequence ID" value="ACD30662.1"/>
    <property type="molecule type" value="Genomic_DNA"/>
</dbReference>
<dbReference type="SMR" id="B2SG03"/>
<dbReference type="KEGG" id="ftm:FTM_0682"/>
<dbReference type="HOGENOM" id="CLU_042258_1_0_6"/>
<dbReference type="UniPathway" id="UPA00056">
    <property type="reaction ID" value="UER00096"/>
</dbReference>
<dbReference type="GO" id="GO:0051539">
    <property type="term" value="F:4 iron, 4 sulfur cluster binding"/>
    <property type="evidence" value="ECO:0007669"/>
    <property type="project" value="UniProtKB-UniRule"/>
</dbReference>
<dbReference type="GO" id="GO:0046429">
    <property type="term" value="F:4-hydroxy-3-methylbut-2-en-1-yl diphosphate synthase activity (ferredoxin)"/>
    <property type="evidence" value="ECO:0007669"/>
    <property type="project" value="UniProtKB-UniRule"/>
</dbReference>
<dbReference type="GO" id="GO:0141197">
    <property type="term" value="F:4-hydroxy-3-methylbut-2-enyl-diphosphate synthase activity (flavodoxin)"/>
    <property type="evidence" value="ECO:0007669"/>
    <property type="project" value="UniProtKB-EC"/>
</dbReference>
<dbReference type="GO" id="GO:0005506">
    <property type="term" value="F:iron ion binding"/>
    <property type="evidence" value="ECO:0007669"/>
    <property type="project" value="InterPro"/>
</dbReference>
<dbReference type="GO" id="GO:0019288">
    <property type="term" value="P:isopentenyl diphosphate biosynthetic process, methylerythritol 4-phosphate pathway"/>
    <property type="evidence" value="ECO:0007669"/>
    <property type="project" value="UniProtKB-UniRule"/>
</dbReference>
<dbReference type="GO" id="GO:0016114">
    <property type="term" value="P:terpenoid biosynthetic process"/>
    <property type="evidence" value="ECO:0007669"/>
    <property type="project" value="InterPro"/>
</dbReference>
<dbReference type="FunFam" id="3.20.20.20:FF:000001">
    <property type="entry name" value="4-hydroxy-3-methylbut-2-en-1-yl diphosphate synthase (flavodoxin)"/>
    <property type="match status" value="1"/>
</dbReference>
<dbReference type="FunFam" id="3.30.413.10:FF:000012">
    <property type="entry name" value="4-hydroxy-3-methylbut-2-en-1-yl diphosphate synthase (flavodoxin)"/>
    <property type="match status" value="1"/>
</dbReference>
<dbReference type="Gene3D" id="3.20.20.20">
    <property type="entry name" value="Dihydropteroate synthase-like"/>
    <property type="match status" value="1"/>
</dbReference>
<dbReference type="Gene3D" id="3.30.413.10">
    <property type="entry name" value="Sulfite Reductase Hemoprotein, domain 1"/>
    <property type="match status" value="1"/>
</dbReference>
<dbReference type="HAMAP" id="MF_00159">
    <property type="entry name" value="IspG"/>
    <property type="match status" value="1"/>
</dbReference>
<dbReference type="InterPro" id="IPR011005">
    <property type="entry name" value="Dihydropteroate_synth-like_sf"/>
</dbReference>
<dbReference type="InterPro" id="IPR016425">
    <property type="entry name" value="IspG_bac"/>
</dbReference>
<dbReference type="InterPro" id="IPR004588">
    <property type="entry name" value="IspG_bac-typ"/>
</dbReference>
<dbReference type="InterPro" id="IPR045854">
    <property type="entry name" value="NO2/SO3_Rdtase_4Fe4S_sf"/>
</dbReference>
<dbReference type="NCBIfam" id="TIGR00612">
    <property type="entry name" value="ispG_gcpE"/>
    <property type="match status" value="1"/>
</dbReference>
<dbReference type="NCBIfam" id="NF001540">
    <property type="entry name" value="PRK00366.1"/>
    <property type="match status" value="1"/>
</dbReference>
<dbReference type="PANTHER" id="PTHR30454">
    <property type="entry name" value="4-HYDROXY-3-METHYLBUT-2-EN-1-YL DIPHOSPHATE SYNTHASE"/>
    <property type="match status" value="1"/>
</dbReference>
<dbReference type="PANTHER" id="PTHR30454:SF0">
    <property type="entry name" value="4-HYDROXY-3-METHYLBUT-2-EN-1-YL DIPHOSPHATE SYNTHASE (FERREDOXIN), CHLOROPLASTIC"/>
    <property type="match status" value="1"/>
</dbReference>
<dbReference type="Pfam" id="PF04551">
    <property type="entry name" value="GcpE"/>
    <property type="match status" value="1"/>
</dbReference>
<dbReference type="PIRSF" id="PIRSF004640">
    <property type="entry name" value="IspG"/>
    <property type="match status" value="1"/>
</dbReference>
<dbReference type="SUPFAM" id="SSF51717">
    <property type="entry name" value="Dihydropteroate synthetase-like"/>
    <property type="match status" value="1"/>
</dbReference>
<dbReference type="SUPFAM" id="SSF56014">
    <property type="entry name" value="Nitrite and sulphite reductase 4Fe-4S domain-like"/>
    <property type="match status" value="1"/>
</dbReference>
<feature type="chain" id="PRO_1000097162" description="4-hydroxy-3-methylbut-2-en-1-yl diphosphate synthase (flavodoxin)">
    <location>
        <begin position="1"/>
        <end position="405"/>
    </location>
</feature>
<feature type="binding site" evidence="1">
    <location>
        <position position="297"/>
    </location>
    <ligand>
        <name>[4Fe-4S] cluster</name>
        <dbReference type="ChEBI" id="CHEBI:49883"/>
    </ligand>
</feature>
<feature type="binding site" evidence="1">
    <location>
        <position position="300"/>
    </location>
    <ligand>
        <name>[4Fe-4S] cluster</name>
        <dbReference type="ChEBI" id="CHEBI:49883"/>
    </ligand>
</feature>
<feature type="binding site" evidence="1">
    <location>
        <position position="343"/>
    </location>
    <ligand>
        <name>[4Fe-4S] cluster</name>
        <dbReference type="ChEBI" id="CHEBI:49883"/>
    </ligand>
</feature>
<feature type="binding site" evidence="1">
    <location>
        <position position="350"/>
    </location>
    <ligand>
        <name>[4Fe-4S] cluster</name>
        <dbReference type="ChEBI" id="CHEBI:49883"/>
    </ligand>
</feature>
<reference key="1">
    <citation type="journal article" date="2009" name="PLoS Pathog.">
        <title>Molecular evolutionary consequences of niche restriction in Francisella tularensis, a facultative intracellular pathogen.</title>
        <authorList>
            <person name="Larsson P."/>
            <person name="Elfsmark D."/>
            <person name="Svensson K."/>
            <person name="Wikstroem P."/>
            <person name="Forsman M."/>
            <person name="Brettin T."/>
            <person name="Keim P."/>
            <person name="Johansson A."/>
        </authorList>
    </citation>
    <scope>NUCLEOTIDE SEQUENCE [LARGE SCALE GENOMIC DNA]</scope>
    <source>
        <strain>FSC147</strain>
    </source>
</reference>